<gene>
    <name type="primary">PCF6</name>
    <name type="ORF">OsI_013324</name>
</gene>
<reference key="1">
    <citation type="journal article" date="2005" name="PLoS Biol.">
        <title>The genomes of Oryza sativa: a history of duplications.</title>
        <authorList>
            <person name="Yu J."/>
            <person name="Wang J."/>
            <person name="Lin W."/>
            <person name="Li S."/>
            <person name="Li H."/>
            <person name="Zhou J."/>
            <person name="Ni P."/>
            <person name="Dong W."/>
            <person name="Hu S."/>
            <person name="Zeng C."/>
            <person name="Zhang J."/>
            <person name="Zhang Y."/>
            <person name="Li R."/>
            <person name="Xu Z."/>
            <person name="Li S."/>
            <person name="Li X."/>
            <person name="Zheng H."/>
            <person name="Cong L."/>
            <person name="Lin L."/>
            <person name="Yin J."/>
            <person name="Geng J."/>
            <person name="Li G."/>
            <person name="Shi J."/>
            <person name="Liu J."/>
            <person name="Lv H."/>
            <person name="Li J."/>
            <person name="Wang J."/>
            <person name="Deng Y."/>
            <person name="Ran L."/>
            <person name="Shi X."/>
            <person name="Wang X."/>
            <person name="Wu Q."/>
            <person name="Li C."/>
            <person name="Ren X."/>
            <person name="Wang J."/>
            <person name="Wang X."/>
            <person name="Li D."/>
            <person name="Liu D."/>
            <person name="Zhang X."/>
            <person name="Ji Z."/>
            <person name="Zhao W."/>
            <person name="Sun Y."/>
            <person name="Zhang Z."/>
            <person name="Bao J."/>
            <person name="Han Y."/>
            <person name="Dong L."/>
            <person name="Ji J."/>
            <person name="Chen P."/>
            <person name="Wu S."/>
            <person name="Liu J."/>
            <person name="Xiao Y."/>
            <person name="Bu D."/>
            <person name="Tan J."/>
            <person name="Yang L."/>
            <person name="Ye C."/>
            <person name="Zhang J."/>
            <person name="Xu J."/>
            <person name="Zhou Y."/>
            <person name="Yu Y."/>
            <person name="Zhang B."/>
            <person name="Zhuang S."/>
            <person name="Wei H."/>
            <person name="Liu B."/>
            <person name="Lei M."/>
            <person name="Yu H."/>
            <person name="Li Y."/>
            <person name="Xu H."/>
            <person name="Wei S."/>
            <person name="He X."/>
            <person name="Fang L."/>
            <person name="Zhang Z."/>
            <person name="Zhang Y."/>
            <person name="Huang X."/>
            <person name="Su Z."/>
            <person name="Tong W."/>
            <person name="Li J."/>
            <person name="Tong Z."/>
            <person name="Li S."/>
            <person name="Ye J."/>
            <person name="Wang L."/>
            <person name="Fang L."/>
            <person name="Lei T."/>
            <person name="Chen C.-S."/>
            <person name="Chen H.-C."/>
            <person name="Xu Z."/>
            <person name="Li H."/>
            <person name="Huang H."/>
            <person name="Zhang F."/>
            <person name="Xu H."/>
            <person name="Li N."/>
            <person name="Zhao C."/>
            <person name="Li S."/>
            <person name="Dong L."/>
            <person name="Huang Y."/>
            <person name="Li L."/>
            <person name="Xi Y."/>
            <person name="Qi Q."/>
            <person name="Li W."/>
            <person name="Zhang B."/>
            <person name="Hu W."/>
            <person name="Zhang Y."/>
            <person name="Tian X."/>
            <person name="Jiao Y."/>
            <person name="Liang X."/>
            <person name="Jin J."/>
            <person name="Gao L."/>
            <person name="Zheng W."/>
            <person name="Hao B."/>
            <person name="Liu S.-M."/>
            <person name="Wang W."/>
            <person name="Yuan L."/>
            <person name="Cao M."/>
            <person name="McDermott J."/>
            <person name="Samudrala R."/>
            <person name="Wang J."/>
            <person name="Wong G.K.-S."/>
            <person name="Yang H."/>
        </authorList>
    </citation>
    <scope>NUCLEOTIDE SEQUENCE [LARGE SCALE GENOMIC DNA]</scope>
    <source>
        <strain>cv. 93-11</strain>
    </source>
</reference>
<reference key="2">
    <citation type="journal article" date="2002" name="Plant J.">
        <title>DNA binding and dimerization specificity and potential targets for the TCP protein family.</title>
        <authorList>
            <person name="Kosugi S."/>
            <person name="Ohashi Y."/>
        </authorList>
    </citation>
    <scope>FUNCTION</scope>
</reference>
<protein>
    <recommendedName>
        <fullName>Transcription factor PCF6</fullName>
    </recommendedName>
</protein>
<feature type="chain" id="PRO_0000330810" description="Transcription factor PCF6">
    <location>
        <begin position="1"/>
        <end position="358"/>
    </location>
</feature>
<feature type="domain" description="TCP" evidence="1">
    <location>
        <begin position="52"/>
        <end position="110"/>
    </location>
</feature>
<feature type="region of interest" description="Disordered" evidence="2">
    <location>
        <begin position="1"/>
        <end position="29"/>
    </location>
</feature>
<feature type="region of interest" description="Disordered" evidence="2">
    <location>
        <begin position="127"/>
        <end position="163"/>
    </location>
</feature>
<feature type="region of interest" description="Disordered" evidence="2">
    <location>
        <begin position="282"/>
        <end position="308"/>
    </location>
</feature>
<feature type="compositionally biased region" description="Gly residues" evidence="2">
    <location>
        <begin position="7"/>
        <end position="16"/>
    </location>
</feature>
<feature type="compositionally biased region" description="Polar residues" evidence="2">
    <location>
        <begin position="143"/>
        <end position="156"/>
    </location>
</feature>
<feature type="compositionally biased region" description="Polar residues" evidence="2">
    <location>
        <begin position="285"/>
        <end position="296"/>
    </location>
</feature>
<name>PCF6_ORYSI</name>
<keyword id="KW-0010">Activator</keyword>
<keyword id="KW-0217">Developmental protein</keyword>
<keyword id="KW-0238">DNA-binding</keyword>
<keyword id="KW-0539">Nucleus</keyword>
<keyword id="KW-1185">Reference proteome</keyword>
<keyword id="KW-0804">Transcription</keyword>
<keyword id="KW-0805">Transcription regulation</keyword>
<organism>
    <name type="scientific">Oryza sativa subsp. indica</name>
    <name type="common">Rice</name>
    <dbReference type="NCBI Taxonomy" id="39946"/>
    <lineage>
        <taxon>Eukaryota</taxon>
        <taxon>Viridiplantae</taxon>
        <taxon>Streptophyta</taxon>
        <taxon>Embryophyta</taxon>
        <taxon>Tracheophyta</taxon>
        <taxon>Spermatophyta</taxon>
        <taxon>Magnoliopsida</taxon>
        <taxon>Liliopsida</taxon>
        <taxon>Poales</taxon>
        <taxon>Poaceae</taxon>
        <taxon>BOP clade</taxon>
        <taxon>Oryzoideae</taxon>
        <taxon>Oryzeae</taxon>
        <taxon>Oryzinae</taxon>
        <taxon>Oryza</taxon>
        <taxon>Oryza sativa</taxon>
    </lineage>
</organism>
<evidence type="ECO:0000255" key="1">
    <source>
        <dbReference type="PROSITE-ProRule" id="PRU00701"/>
    </source>
</evidence>
<evidence type="ECO:0000256" key="2">
    <source>
        <dbReference type="SAM" id="MobiDB-lite"/>
    </source>
</evidence>
<evidence type="ECO:0000269" key="3">
    <source>
    </source>
</evidence>
<evidence type="ECO:0000305" key="4"/>
<proteinExistence type="predicted"/>
<dbReference type="EMBL" id="CM000128">
    <property type="protein sequence ID" value="EAY92091.1"/>
    <property type="molecule type" value="Genomic_DNA"/>
</dbReference>
<dbReference type="SMR" id="A2XMN1"/>
<dbReference type="STRING" id="39946.A2XMN1"/>
<dbReference type="EnsemblPlants" id="BGIOSGA013684-TA">
    <property type="protein sequence ID" value="BGIOSGA013684-PA"/>
    <property type="gene ID" value="BGIOSGA013684"/>
</dbReference>
<dbReference type="EnsemblPlants" id="OsGoSa_03g0036790.01">
    <property type="protein sequence ID" value="OsGoSa_03g0036790.01"/>
    <property type="gene ID" value="OsGoSa_03g0036790"/>
</dbReference>
<dbReference type="EnsemblPlants" id="OsIR64_03g0036650.01">
    <property type="protein sequence ID" value="OsIR64_03g0036650.01"/>
    <property type="gene ID" value="OsIR64_03g0036650"/>
</dbReference>
<dbReference type="EnsemblPlants" id="OsKYG_03g0037150.01">
    <property type="protein sequence ID" value="OsKYG_03g0037150.01"/>
    <property type="gene ID" value="OsKYG_03g0037150"/>
</dbReference>
<dbReference type="EnsemblPlants" id="OsLaMu_03g0036840.01">
    <property type="protein sequence ID" value="OsLaMu_03g0036840.01"/>
    <property type="gene ID" value="OsLaMu_03g0036840"/>
</dbReference>
<dbReference type="EnsemblPlants" id="OsLiXu_Ung0014740.01">
    <property type="protein sequence ID" value="OsLiXu_Ung0014740.01"/>
    <property type="gene ID" value="OsLiXu_Ung0014740"/>
</dbReference>
<dbReference type="EnsemblPlants" id="OsPr106_03g0036850.01">
    <property type="protein sequence ID" value="OsPr106_03g0036850.01"/>
    <property type="gene ID" value="OsPr106_03g0036850"/>
</dbReference>
<dbReference type="EnsemblPlants" id="OsZS97_03G036810_01">
    <property type="protein sequence ID" value="OsZS97_03G036810_01"/>
    <property type="gene ID" value="OsZS97_03G036810"/>
</dbReference>
<dbReference type="Gramene" id="BGIOSGA013684-TA">
    <property type="protein sequence ID" value="BGIOSGA013684-PA"/>
    <property type="gene ID" value="BGIOSGA013684"/>
</dbReference>
<dbReference type="Gramene" id="OsGoSa_03g0036790.01">
    <property type="protein sequence ID" value="OsGoSa_03g0036790.01"/>
    <property type="gene ID" value="OsGoSa_03g0036790"/>
</dbReference>
<dbReference type="Gramene" id="OsIR64_03g0036650.01">
    <property type="protein sequence ID" value="OsIR64_03g0036650.01"/>
    <property type="gene ID" value="OsIR64_03g0036650"/>
</dbReference>
<dbReference type="Gramene" id="OsKYG_03g0037150.01">
    <property type="protein sequence ID" value="OsKYG_03g0037150.01"/>
    <property type="gene ID" value="OsKYG_03g0037150"/>
</dbReference>
<dbReference type="Gramene" id="OsLaMu_03g0036840.01">
    <property type="protein sequence ID" value="OsLaMu_03g0036840.01"/>
    <property type="gene ID" value="OsLaMu_03g0036840"/>
</dbReference>
<dbReference type="Gramene" id="OsLiXu_Ung0014740.01">
    <property type="protein sequence ID" value="OsLiXu_Ung0014740.01"/>
    <property type="gene ID" value="OsLiXu_Ung0014740"/>
</dbReference>
<dbReference type="Gramene" id="OsPr106_03g0036850.01">
    <property type="protein sequence ID" value="OsPr106_03g0036850.01"/>
    <property type="gene ID" value="OsPr106_03g0036850"/>
</dbReference>
<dbReference type="Gramene" id="OsZS97_03G036810_01">
    <property type="protein sequence ID" value="OsZS97_03G036810_01"/>
    <property type="gene ID" value="OsZS97_03G036810"/>
</dbReference>
<dbReference type="HOGENOM" id="CLU_036572_1_0_1"/>
<dbReference type="OMA" id="RQWMAPS"/>
<dbReference type="OrthoDB" id="688758at2759"/>
<dbReference type="Proteomes" id="UP000007015">
    <property type="component" value="Chromosome 3"/>
</dbReference>
<dbReference type="GO" id="GO:0005634">
    <property type="term" value="C:nucleus"/>
    <property type="evidence" value="ECO:0007669"/>
    <property type="project" value="UniProtKB-SubCell"/>
</dbReference>
<dbReference type="GO" id="GO:0003700">
    <property type="term" value="F:DNA-binding transcription factor activity"/>
    <property type="evidence" value="ECO:0007669"/>
    <property type="project" value="InterPro"/>
</dbReference>
<dbReference type="GO" id="GO:0043565">
    <property type="term" value="F:sequence-specific DNA binding"/>
    <property type="evidence" value="ECO:0007669"/>
    <property type="project" value="TreeGrafter"/>
</dbReference>
<dbReference type="GO" id="GO:2000032">
    <property type="term" value="P:regulation of secondary shoot formation"/>
    <property type="evidence" value="ECO:0007669"/>
    <property type="project" value="TreeGrafter"/>
</dbReference>
<dbReference type="InterPro" id="IPR017887">
    <property type="entry name" value="TF_TCP_subgr"/>
</dbReference>
<dbReference type="InterPro" id="IPR005333">
    <property type="entry name" value="Transcription_factor_TCP"/>
</dbReference>
<dbReference type="PANTHER" id="PTHR31072:SF114">
    <property type="entry name" value="TRANSCRIPTION FACTOR PCF6"/>
    <property type="match status" value="1"/>
</dbReference>
<dbReference type="PANTHER" id="PTHR31072">
    <property type="entry name" value="TRANSCRIPTION FACTOR TCP4-RELATED"/>
    <property type="match status" value="1"/>
</dbReference>
<dbReference type="Pfam" id="PF03634">
    <property type="entry name" value="TCP"/>
    <property type="match status" value="1"/>
</dbReference>
<dbReference type="PROSITE" id="PS51369">
    <property type="entry name" value="TCP"/>
    <property type="match status" value="1"/>
</dbReference>
<accession>A2XMN1</accession>
<comment type="function">
    <text evidence="3">Transcription activator. Binds the promoter core sequence 5'-GGNCC-3'.</text>
</comment>
<comment type="subunit">
    <text evidence="4">Forms homodimers and heterodimers.</text>
</comment>
<comment type="subcellular location">
    <subcellularLocation>
        <location evidence="4">Nucleus</location>
    </subcellularLocation>
</comment>
<sequence>MEAAVGDGEGGGGGGGRGKRGRGGGGGEMVEAVWGQTGSTASRIYRVRATGGKDRHSKVYTAKGIRDRRVRLSVATAIQFYDLQDRLGFDQPSKAIEWLINAASPAIDTLPSLDPAAFAAIPHAAAADAAPTRRRSQQQQQQLSNKSGCSSTSETSKGSDKEVTVASAPAQAASFTELLIAGVAASSAGGGAIGNGADCVGIAHPGKGGAEGASTYGFSAASSFGDAPPIGMVPAPPFNFSAPGADMAAHYSLAQDQLAAPPPPAGGDYNLNFSMSSGFLGANRGTLQSNSPSNMSGHHHHHHQQQLQRLDGSTISFLLGHAAAAAHPAASEGQITSTAALQLWDGFRHSGMKEKSKN</sequence>